<accession>A5W9W6</accession>
<sequence length="473" mass="49970">MKLSMPRFDQAPVLVVGDVMLDRYWHGGTSRISPEAPVPVVKVDQIEDRPGGAANVALNIAALGAPASLIGVTGQDEAADSLANSLQAAGVRSVFQRIAHQPTIVKLRVMSRHQQLLRIDFEEPFATDPLSLGAEVDSLLEGVKVLVLSDYGKGALKNHQNLIQAARAKGIPVLADPKGKDFSIYRGASLITPNLSEFETIVGRCVDEAELVAKGLQLLQDLDLGALLVTRGEHGMTLLRVGQPALHLPARAREVFDVTGAGDTVISTLAAAIAAGEDLPHAVALANLAAGIVVGKLGTAAISAPELRRAIQREEGSERGVLGLEQLLLAIDDARAHNEKIVFTNGCFDILHAGHVTYLEQARAQGDRLIVAVNDDASVSRLKGPGRPINSVDRRMAVLAGLGAVDWVISFPEGTPENLLSQVKPDVLVKGGDYGIDQVVGADIVKGYGGTVKVLGLVENSSTTAIVEKIRKN</sequence>
<comment type="function">
    <text evidence="1">Catalyzes the phosphorylation of D-glycero-D-manno-heptose 7-phosphate at the C-1 position to selectively form D-glycero-beta-D-manno-heptose-1,7-bisphosphate.</text>
</comment>
<comment type="function">
    <text evidence="1">Catalyzes the ADP transfer from ATP to D-glycero-beta-D-manno-heptose 1-phosphate, yielding ADP-D-glycero-beta-D-manno-heptose.</text>
</comment>
<comment type="catalytic activity">
    <reaction evidence="1">
        <text>D-glycero-beta-D-manno-heptose 7-phosphate + ATP = D-glycero-beta-D-manno-heptose 1,7-bisphosphate + ADP + H(+)</text>
        <dbReference type="Rhea" id="RHEA:27473"/>
        <dbReference type="ChEBI" id="CHEBI:15378"/>
        <dbReference type="ChEBI" id="CHEBI:30616"/>
        <dbReference type="ChEBI" id="CHEBI:60204"/>
        <dbReference type="ChEBI" id="CHEBI:60208"/>
        <dbReference type="ChEBI" id="CHEBI:456216"/>
        <dbReference type="EC" id="2.7.1.167"/>
    </reaction>
</comment>
<comment type="catalytic activity">
    <reaction evidence="1">
        <text>D-glycero-beta-D-manno-heptose 1-phosphate + ATP + H(+) = ADP-D-glycero-beta-D-manno-heptose + diphosphate</text>
        <dbReference type="Rhea" id="RHEA:27465"/>
        <dbReference type="ChEBI" id="CHEBI:15378"/>
        <dbReference type="ChEBI" id="CHEBI:30616"/>
        <dbReference type="ChEBI" id="CHEBI:33019"/>
        <dbReference type="ChEBI" id="CHEBI:59967"/>
        <dbReference type="ChEBI" id="CHEBI:61593"/>
        <dbReference type="EC" id="2.7.7.70"/>
    </reaction>
</comment>
<comment type="pathway">
    <text evidence="1">Nucleotide-sugar biosynthesis; ADP-L-glycero-beta-D-manno-heptose biosynthesis; ADP-L-glycero-beta-D-manno-heptose from D-glycero-beta-D-manno-heptose 7-phosphate: step 1/4.</text>
</comment>
<comment type="pathway">
    <text evidence="1">Nucleotide-sugar biosynthesis; ADP-L-glycero-beta-D-manno-heptose biosynthesis; ADP-L-glycero-beta-D-manno-heptose from D-glycero-beta-D-manno-heptose 7-phosphate: step 3/4.</text>
</comment>
<comment type="subunit">
    <text evidence="1">Homodimer.</text>
</comment>
<comment type="similarity">
    <text evidence="1">In the N-terminal section; belongs to the carbohydrate kinase PfkB family.</text>
</comment>
<comment type="similarity">
    <text evidence="1">In the C-terminal section; belongs to the cytidylyltransferase family.</text>
</comment>
<dbReference type="EC" id="2.7.1.167" evidence="1"/>
<dbReference type="EC" id="2.7.7.70" evidence="1"/>
<dbReference type="EMBL" id="CP000712">
    <property type="protein sequence ID" value="ABQ80926.1"/>
    <property type="molecule type" value="Genomic_DNA"/>
</dbReference>
<dbReference type="SMR" id="A5W9W6"/>
<dbReference type="KEGG" id="ppf:Pput_4806"/>
<dbReference type="eggNOG" id="COG0615">
    <property type="taxonomic scope" value="Bacteria"/>
</dbReference>
<dbReference type="eggNOG" id="COG2870">
    <property type="taxonomic scope" value="Bacteria"/>
</dbReference>
<dbReference type="HOGENOM" id="CLU_021150_2_1_6"/>
<dbReference type="UniPathway" id="UPA00356">
    <property type="reaction ID" value="UER00437"/>
</dbReference>
<dbReference type="UniPathway" id="UPA00356">
    <property type="reaction ID" value="UER00439"/>
</dbReference>
<dbReference type="GO" id="GO:0005829">
    <property type="term" value="C:cytosol"/>
    <property type="evidence" value="ECO:0007669"/>
    <property type="project" value="TreeGrafter"/>
</dbReference>
<dbReference type="GO" id="GO:0005524">
    <property type="term" value="F:ATP binding"/>
    <property type="evidence" value="ECO:0007669"/>
    <property type="project" value="UniProtKB-UniRule"/>
</dbReference>
<dbReference type="GO" id="GO:0033785">
    <property type="term" value="F:heptose 7-phosphate kinase activity"/>
    <property type="evidence" value="ECO:0007669"/>
    <property type="project" value="UniProtKB-UniRule"/>
</dbReference>
<dbReference type="GO" id="GO:0033786">
    <property type="term" value="F:heptose-1-phosphate adenylyltransferase activity"/>
    <property type="evidence" value="ECO:0007669"/>
    <property type="project" value="UniProtKB-UniRule"/>
</dbReference>
<dbReference type="GO" id="GO:0016773">
    <property type="term" value="F:phosphotransferase activity, alcohol group as acceptor"/>
    <property type="evidence" value="ECO:0007669"/>
    <property type="project" value="InterPro"/>
</dbReference>
<dbReference type="GO" id="GO:0097171">
    <property type="term" value="P:ADP-L-glycero-beta-D-manno-heptose biosynthetic process"/>
    <property type="evidence" value="ECO:0007669"/>
    <property type="project" value="UniProtKB-UniPathway"/>
</dbReference>
<dbReference type="CDD" id="cd01172">
    <property type="entry name" value="RfaE_like"/>
    <property type="match status" value="1"/>
</dbReference>
<dbReference type="FunFam" id="3.40.1190.20:FF:000002">
    <property type="entry name" value="Bifunctional protein HldE"/>
    <property type="match status" value="1"/>
</dbReference>
<dbReference type="FunFam" id="3.40.50.620:FF:000028">
    <property type="entry name" value="Bifunctional protein HldE"/>
    <property type="match status" value="1"/>
</dbReference>
<dbReference type="Gene3D" id="3.40.1190.20">
    <property type="match status" value="1"/>
</dbReference>
<dbReference type="Gene3D" id="3.40.50.620">
    <property type="entry name" value="HUPs"/>
    <property type="match status" value="1"/>
</dbReference>
<dbReference type="HAMAP" id="MF_01603">
    <property type="entry name" value="HldE"/>
    <property type="match status" value="1"/>
</dbReference>
<dbReference type="InterPro" id="IPR023030">
    <property type="entry name" value="Bifunc_HldE"/>
</dbReference>
<dbReference type="InterPro" id="IPR002173">
    <property type="entry name" value="Carboh/pur_kinase_PfkB_CS"/>
</dbReference>
<dbReference type="InterPro" id="IPR004821">
    <property type="entry name" value="Cyt_trans-like"/>
</dbReference>
<dbReference type="InterPro" id="IPR011611">
    <property type="entry name" value="PfkB_dom"/>
</dbReference>
<dbReference type="InterPro" id="IPR011913">
    <property type="entry name" value="RfaE_dom_I"/>
</dbReference>
<dbReference type="InterPro" id="IPR011914">
    <property type="entry name" value="RfaE_dom_II"/>
</dbReference>
<dbReference type="InterPro" id="IPR029056">
    <property type="entry name" value="Ribokinase-like"/>
</dbReference>
<dbReference type="InterPro" id="IPR014729">
    <property type="entry name" value="Rossmann-like_a/b/a_fold"/>
</dbReference>
<dbReference type="NCBIfam" id="TIGR00125">
    <property type="entry name" value="cyt_tran_rel"/>
    <property type="match status" value="1"/>
</dbReference>
<dbReference type="NCBIfam" id="NF008454">
    <property type="entry name" value="PRK11316.1"/>
    <property type="match status" value="1"/>
</dbReference>
<dbReference type="NCBIfam" id="TIGR02198">
    <property type="entry name" value="rfaE_dom_I"/>
    <property type="match status" value="1"/>
</dbReference>
<dbReference type="NCBIfam" id="TIGR02199">
    <property type="entry name" value="rfaE_dom_II"/>
    <property type="match status" value="1"/>
</dbReference>
<dbReference type="PANTHER" id="PTHR46969">
    <property type="entry name" value="BIFUNCTIONAL PROTEIN HLDE"/>
    <property type="match status" value="1"/>
</dbReference>
<dbReference type="PANTHER" id="PTHR46969:SF1">
    <property type="entry name" value="BIFUNCTIONAL PROTEIN HLDE"/>
    <property type="match status" value="1"/>
</dbReference>
<dbReference type="Pfam" id="PF01467">
    <property type="entry name" value="CTP_transf_like"/>
    <property type="match status" value="1"/>
</dbReference>
<dbReference type="Pfam" id="PF00294">
    <property type="entry name" value="PfkB"/>
    <property type="match status" value="1"/>
</dbReference>
<dbReference type="SUPFAM" id="SSF52374">
    <property type="entry name" value="Nucleotidylyl transferase"/>
    <property type="match status" value="1"/>
</dbReference>
<dbReference type="SUPFAM" id="SSF53613">
    <property type="entry name" value="Ribokinase-like"/>
    <property type="match status" value="1"/>
</dbReference>
<dbReference type="PROSITE" id="PS00583">
    <property type="entry name" value="PFKB_KINASES_1"/>
    <property type="match status" value="1"/>
</dbReference>
<protein>
    <recommendedName>
        <fullName evidence="1">Bifunctional protein HldE</fullName>
    </recommendedName>
    <domain>
        <recommendedName>
            <fullName evidence="1">D-beta-D-heptose 7-phosphate kinase</fullName>
            <ecNumber evidence="1">2.7.1.167</ecNumber>
        </recommendedName>
        <alternativeName>
            <fullName evidence="1">D-beta-D-heptose 7-phosphotransferase</fullName>
        </alternativeName>
        <alternativeName>
            <fullName evidence="1">D-glycero-beta-D-manno-heptose-7-phosphate kinase</fullName>
        </alternativeName>
    </domain>
    <domain>
        <recommendedName>
            <fullName evidence="1">D-beta-D-heptose 1-phosphate adenylyltransferase</fullName>
            <ecNumber evidence="1">2.7.7.70</ecNumber>
        </recommendedName>
        <alternativeName>
            <fullName evidence="1">D-glycero-beta-D-manno-heptose 1-phosphate adenylyltransferase</fullName>
        </alternativeName>
    </domain>
</protein>
<name>HLDE_PSEP1</name>
<feature type="chain" id="PRO_1000069401" description="Bifunctional protein HldE">
    <location>
        <begin position="1"/>
        <end position="473"/>
    </location>
</feature>
<feature type="region of interest" description="Ribokinase">
    <location>
        <begin position="1"/>
        <end position="318"/>
    </location>
</feature>
<feature type="region of interest" description="Cytidylyltransferase">
    <location>
        <begin position="343"/>
        <end position="473"/>
    </location>
</feature>
<feature type="active site" evidence="1">
    <location>
        <position position="263"/>
    </location>
</feature>
<feature type="binding site" evidence="1">
    <location>
        <begin position="194"/>
        <end position="197"/>
    </location>
    <ligand>
        <name>ATP</name>
        <dbReference type="ChEBI" id="CHEBI:30616"/>
    </ligand>
</feature>
<evidence type="ECO:0000255" key="1">
    <source>
        <dbReference type="HAMAP-Rule" id="MF_01603"/>
    </source>
</evidence>
<keyword id="KW-0067">ATP-binding</keyword>
<keyword id="KW-0119">Carbohydrate metabolism</keyword>
<keyword id="KW-0418">Kinase</keyword>
<keyword id="KW-0511">Multifunctional enzyme</keyword>
<keyword id="KW-0547">Nucleotide-binding</keyword>
<keyword id="KW-0548">Nucleotidyltransferase</keyword>
<keyword id="KW-0808">Transferase</keyword>
<proteinExistence type="inferred from homology"/>
<gene>
    <name evidence="1" type="primary">hldE</name>
    <name type="ordered locus">Pput_4806</name>
</gene>
<reference key="1">
    <citation type="submission" date="2007-05" db="EMBL/GenBank/DDBJ databases">
        <title>Complete sequence of Pseudomonas putida F1.</title>
        <authorList>
            <consortium name="US DOE Joint Genome Institute"/>
            <person name="Copeland A."/>
            <person name="Lucas S."/>
            <person name="Lapidus A."/>
            <person name="Barry K."/>
            <person name="Detter J.C."/>
            <person name="Glavina del Rio T."/>
            <person name="Hammon N."/>
            <person name="Israni S."/>
            <person name="Dalin E."/>
            <person name="Tice H."/>
            <person name="Pitluck S."/>
            <person name="Chain P."/>
            <person name="Malfatti S."/>
            <person name="Shin M."/>
            <person name="Vergez L."/>
            <person name="Schmutz J."/>
            <person name="Larimer F."/>
            <person name="Land M."/>
            <person name="Hauser L."/>
            <person name="Kyrpides N."/>
            <person name="Lykidis A."/>
            <person name="Parales R."/>
            <person name="Richardson P."/>
        </authorList>
    </citation>
    <scope>NUCLEOTIDE SEQUENCE [LARGE SCALE GENOMIC DNA]</scope>
    <source>
        <strain>ATCC 700007 / DSM 6899 / JCM 31910 / BCRC 17059 / LMG 24140 / F1</strain>
    </source>
</reference>
<organism>
    <name type="scientific">Pseudomonas putida (strain ATCC 700007 / DSM 6899 / JCM 31910 / BCRC 17059 / LMG 24140 / F1)</name>
    <dbReference type="NCBI Taxonomy" id="351746"/>
    <lineage>
        <taxon>Bacteria</taxon>
        <taxon>Pseudomonadati</taxon>
        <taxon>Pseudomonadota</taxon>
        <taxon>Gammaproteobacteria</taxon>
        <taxon>Pseudomonadales</taxon>
        <taxon>Pseudomonadaceae</taxon>
        <taxon>Pseudomonas</taxon>
    </lineage>
</organism>